<protein>
    <recommendedName>
        <fullName evidence="1">Thiamine-phosphate synthase</fullName>
        <shortName evidence="1">TP synthase</shortName>
        <shortName evidence="1">TPS</shortName>
        <ecNumber evidence="1">2.5.1.3</ecNumber>
    </recommendedName>
    <alternativeName>
        <fullName evidence="1">Thiamine-phosphate pyrophosphorylase</fullName>
        <shortName evidence="1">TMP pyrophosphorylase</shortName>
        <shortName evidence="1">TMP-PPase</shortName>
    </alternativeName>
</protein>
<keyword id="KW-0460">Magnesium</keyword>
<keyword id="KW-0479">Metal-binding</keyword>
<keyword id="KW-1185">Reference proteome</keyword>
<keyword id="KW-0784">Thiamine biosynthesis</keyword>
<keyword id="KW-0808">Transferase</keyword>
<evidence type="ECO:0000255" key="1">
    <source>
        <dbReference type="HAMAP-Rule" id="MF_00097"/>
    </source>
</evidence>
<dbReference type="EC" id="2.5.1.3" evidence="1"/>
<dbReference type="EMBL" id="CP000103">
    <property type="protein sequence ID" value="ABB75915.1"/>
    <property type="molecule type" value="Genomic_DNA"/>
</dbReference>
<dbReference type="RefSeq" id="WP_011381912.1">
    <property type="nucleotide sequence ID" value="NC_007614.1"/>
</dbReference>
<dbReference type="SMR" id="Q2Y5Q6"/>
<dbReference type="STRING" id="323848.Nmul_A2628"/>
<dbReference type="KEGG" id="nmu:Nmul_A2628"/>
<dbReference type="eggNOG" id="COG0352">
    <property type="taxonomic scope" value="Bacteria"/>
</dbReference>
<dbReference type="HOGENOM" id="CLU_018272_3_1_4"/>
<dbReference type="OrthoDB" id="9810880at2"/>
<dbReference type="UniPathway" id="UPA00060">
    <property type="reaction ID" value="UER00141"/>
</dbReference>
<dbReference type="Proteomes" id="UP000002718">
    <property type="component" value="Chromosome"/>
</dbReference>
<dbReference type="GO" id="GO:0005737">
    <property type="term" value="C:cytoplasm"/>
    <property type="evidence" value="ECO:0007669"/>
    <property type="project" value="TreeGrafter"/>
</dbReference>
<dbReference type="GO" id="GO:0000287">
    <property type="term" value="F:magnesium ion binding"/>
    <property type="evidence" value="ECO:0007669"/>
    <property type="project" value="UniProtKB-UniRule"/>
</dbReference>
<dbReference type="GO" id="GO:0004789">
    <property type="term" value="F:thiamine-phosphate diphosphorylase activity"/>
    <property type="evidence" value="ECO:0007669"/>
    <property type="project" value="UniProtKB-UniRule"/>
</dbReference>
<dbReference type="GO" id="GO:0009228">
    <property type="term" value="P:thiamine biosynthetic process"/>
    <property type="evidence" value="ECO:0007669"/>
    <property type="project" value="UniProtKB-KW"/>
</dbReference>
<dbReference type="GO" id="GO:0009229">
    <property type="term" value="P:thiamine diphosphate biosynthetic process"/>
    <property type="evidence" value="ECO:0007669"/>
    <property type="project" value="UniProtKB-UniRule"/>
</dbReference>
<dbReference type="CDD" id="cd00564">
    <property type="entry name" value="TMP_TenI"/>
    <property type="match status" value="1"/>
</dbReference>
<dbReference type="Gene3D" id="3.20.20.70">
    <property type="entry name" value="Aldolase class I"/>
    <property type="match status" value="1"/>
</dbReference>
<dbReference type="HAMAP" id="MF_00097">
    <property type="entry name" value="TMP_synthase"/>
    <property type="match status" value="1"/>
</dbReference>
<dbReference type="InterPro" id="IPR013785">
    <property type="entry name" value="Aldolase_TIM"/>
</dbReference>
<dbReference type="InterPro" id="IPR036206">
    <property type="entry name" value="ThiamineP_synth_sf"/>
</dbReference>
<dbReference type="InterPro" id="IPR022998">
    <property type="entry name" value="ThiamineP_synth_TenI"/>
</dbReference>
<dbReference type="InterPro" id="IPR034291">
    <property type="entry name" value="TMP_synthase"/>
</dbReference>
<dbReference type="NCBIfam" id="TIGR00693">
    <property type="entry name" value="thiE"/>
    <property type="match status" value="1"/>
</dbReference>
<dbReference type="PANTHER" id="PTHR20857">
    <property type="entry name" value="THIAMINE-PHOSPHATE PYROPHOSPHORYLASE"/>
    <property type="match status" value="1"/>
</dbReference>
<dbReference type="PANTHER" id="PTHR20857:SF15">
    <property type="entry name" value="THIAMINE-PHOSPHATE SYNTHASE"/>
    <property type="match status" value="1"/>
</dbReference>
<dbReference type="Pfam" id="PF02581">
    <property type="entry name" value="TMP-TENI"/>
    <property type="match status" value="1"/>
</dbReference>
<dbReference type="SUPFAM" id="SSF51391">
    <property type="entry name" value="Thiamin phosphate synthase"/>
    <property type="match status" value="1"/>
</dbReference>
<feature type="chain" id="PRO_0000336417" description="Thiamine-phosphate synthase">
    <location>
        <begin position="1"/>
        <end position="234"/>
    </location>
</feature>
<feature type="binding site" evidence="1">
    <location>
        <begin position="52"/>
        <end position="56"/>
    </location>
    <ligand>
        <name>4-amino-2-methyl-5-(diphosphooxymethyl)pyrimidine</name>
        <dbReference type="ChEBI" id="CHEBI:57841"/>
    </ligand>
</feature>
<feature type="binding site" evidence="1">
    <location>
        <position position="84"/>
    </location>
    <ligand>
        <name>4-amino-2-methyl-5-(diphosphooxymethyl)pyrimidine</name>
        <dbReference type="ChEBI" id="CHEBI:57841"/>
    </ligand>
</feature>
<feature type="binding site" evidence="1">
    <location>
        <position position="85"/>
    </location>
    <ligand>
        <name>Mg(2+)</name>
        <dbReference type="ChEBI" id="CHEBI:18420"/>
    </ligand>
</feature>
<feature type="binding site" evidence="1">
    <location>
        <position position="104"/>
    </location>
    <ligand>
        <name>Mg(2+)</name>
        <dbReference type="ChEBI" id="CHEBI:18420"/>
    </ligand>
</feature>
<feature type="binding site" evidence="1">
    <location>
        <position position="123"/>
    </location>
    <ligand>
        <name>4-amino-2-methyl-5-(diphosphooxymethyl)pyrimidine</name>
        <dbReference type="ChEBI" id="CHEBI:57841"/>
    </ligand>
</feature>
<feature type="binding site" evidence="1">
    <location>
        <begin position="150"/>
        <end position="152"/>
    </location>
    <ligand>
        <name>2-[(2R,5Z)-2-carboxy-4-methylthiazol-5(2H)-ylidene]ethyl phosphate</name>
        <dbReference type="ChEBI" id="CHEBI:62899"/>
    </ligand>
</feature>
<feature type="binding site" evidence="1">
    <location>
        <position position="153"/>
    </location>
    <ligand>
        <name>4-amino-2-methyl-5-(diphosphooxymethyl)pyrimidine</name>
        <dbReference type="ChEBI" id="CHEBI:57841"/>
    </ligand>
</feature>
<feature type="binding site" evidence="1">
    <location>
        <position position="180"/>
    </location>
    <ligand>
        <name>2-[(2R,5Z)-2-carboxy-4-methylthiazol-5(2H)-ylidene]ethyl phosphate</name>
        <dbReference type="ChEBI" id="CHEBI:62899"/>
    </ligand>
</feature>
<name>THIE_NITMU</name>
<organism>
    <name type="scientific">Nitrosospira multiformis (strain ATCC 25196 / NCIMB 11849 / C 71)</name>
    <dbReference type="NCBI Taxonomy" id="323848"/>
    <lineage>
        <taxon>Bacteria</taxon>
        <taxon>Pseudomonadati</taxon>
        <taxon>Pseudomonadota</taxon>
        <taxon>Betaproteobacteria</taxon>
        <taxon>Nitrosomonadales</taxon>
        <taxon>Nitrosomonadaceae</taxon>
        <taxon>Nitrosospira</taxon>
    </lineage>
</organism>
<accession>Q2Y5Q6</accession>
<sequence>MRTVSRNEIKRCSAAPRREITGLYAITPDTGDTSHLVAMTWRALAGGARLVQYRSKTLNEELHREQARSLAHLCRRFDVPLLINDHIDLALEVGADGVHLGREDAPISQARLKLGHEKIIGISCYNELESAIEAECNGADYVAFGAFFNSVTKTDTVPASIDLLRQGNLEIRIPIVAIGGINSDNALELISAGADAVAVSNALFGARDIRSEAAKFSGLFKRQSFHPSLSRTSQ</sequence>
<comment type="function">
    <text evidence="1">Condenses 4-methyl-5-(beta-hydroxyethyl)thiazole monophosphate (THZ-P) and 2-methyl-4-amino-5-hydroxymethyl pyrimidine pyrophosphate (HMP-PP) to form thiamine monophosphate (TMP).</text>
</comment>
<comment type="catalytic activity">
    <reaction evidence="1">
        <text>2-[(2R,5Z)-2-carboxy-4-methylthiazol-5(2H)-ylidene]ethyl phosphate + 4-amino-2-methyl-5-(diphosphooxymethyl)pyrimidine + 2 H(+) = thiamine phosphate + CO2 + diphosphate</text>
        <dbReference type="Rhea" id="RHEA:47844"/>
        <dbReference type="ChEBI" id="CHEBI:15378"/>
        <dbReference type="ChEBI" id="CHEBI:16526"/>
        <dbReference type="ChEBI" id="CHEBI:33019"/>
        <dbReference type="ChEBI" id="CHEBI:37575"/>
        <dbReference type="ChEBI" id="CHEBI:57841"/>
        <dbReference type="ChEBI" id="CHEBI:62899"/>
        <dbReference type="EC" id="2.5.1.3"/>
    </reaction>
</comment>
<comment type="catalytic activity">
    <reaction evidence="1">
        <text>2-(2-carboxy-4-methylthiazol-5-yl)ethyl phosphate + 4-amino-2-methyl-5-(diphosphooxymethyl)pyrimidine + 2 H(+) = thiamine phosphate + CO2 + diphosphate</text>
        <dbReference type="Rhea" id="RHEA:47848"/>
        <dbReference type="ChEBI" id="CHEBI:15378"/>
        <dbReference type="ChEBI" id="CHEBI:16526"/>
        <dbReference type="ChEBI" id="CHEBI:33019"/>
        <dbReference type="ChEBI" id="CHEBI:37575"/>
        <dbReference type="ChEBI" id="CHEBI:57841"/>
        <dbReference type="ChEBI" id="CHEBI:62890"/>
        <dbReference type="EC" id="2.5.1.3"/>
    </reaction>
</comment>
<comment type="catalytic activity">
    <reaction evidence="1">
        <text>4-methyl-5-(2-phosphooxyethyl)-thiazole + 4-amino-2-methyl-5-(diphosphooxymethyl)pyrimidine + H(+) = thiamine phosphate + diphosphate</text>
        <dbReference type="Rhea" id="RHEA:22328"/>
        <dbReference type="ChEBI" id="CHEBI:15378"/>
        <dbReference type="ChEBI" id="CHEBI:33019"/>
        <dbReference type="ChEBI" id="CHEBI:37575"/>
        <dbReference type="ChEBI" id="CHEBI:57841"/>
        <dbReference type="ChEBI" id="CHEBI:58296"/>
        <dbReference type="EC" id="2.5.1.3"/>
    </reaction>
</comment>
<comment type="cofactor">
    <cofactor evidence="1">
        <name>Mg(2+)</name>
        <dbReference type="ChEBI" id="CHEBI:18420"/>
    </cofactor>
    <text evidence="1">Binds 1 Mg(2+) ion per subunit.</text>
</comment>
<comment type="pathway">
    <text evidence="1">Cofactor biosynthesis; thiamine diphosphate biosynthesis; thiamine phosphate from 4-amino-2-methyl-5-diphosphomethylpyrimidine and 4-methyl-5-(2-phosphoethyl)-thiazole: step 1/1.</text>
</comment>
<comment type="similarity">
    <text evidence="1">Belongs to the thiamine-phosphate synthase family.</text>
</comment>
<reference key="1">
    <citation type="submission" date="2005-08" db="EMBL/GenBank/DDBJ databases">
        <title>Complete sequence of chromosome 1 of Nitrosospira multiformis ATCC 25196.</title>
        <authorList>
            <person name="Copeland A."/>
            <person name="Lucas S."/>
            <person name="Lapidus A."/>
            <person name="Barry K."/>
            <person name="Detter J.C."/>
            <person name="Glavina T."/>
            <person name="Hammon N."/>
            <person name="Israni S."/>
            <person name="Pitluck S."/>
            <person name="Chain P."/>
            <person name="Malfatti S."/>
            <person name="Shin M."/>
            <person name="Vergez L."/>
            <person name="Schmutz J."/>
            <person name="Larimer F."/>
            <person name="Land M."/>
            <person name="Hauser L."/>
            <person name="Kyrpides N."/>
            <person name="Lykidis A."/>
            <person name="Richardson P."/>
        </authorList>
    </citation>
    <scope>NUCLEOTIDE SEQUENCE [LARGE SCALE GENOMIC DNA]</scope>
    <source>
        <strain>ATCC 25196 / NCIMB 11849 / C 71</strain>
    </source>
</reference>
<gene>
    <name evidence="1" type="primary">thiE</name>
    <name type="ordered locus">Nmul_A2628</name>
</gene>
<proteinExistence type="inferred from homology"/>